<protein>
    <recommendedName>
        <fullName evidence="1">Translation initiation factor IF-3</fullName>
    </recommendedName>
</protein>
<comment type="function">
    <text evidence="1">IF-3 binds to the 30S ribosomal subunit and shifts the equilibrium between 70S ribosomes and their 50S and 30S subunits in favor of the free subunits, thus enhancing the availability of 30S subunits on which protein synthesis initiation begins.</text>
</comment>
<comment type="subunit">
    <text evidence="1">Monomer.</text>
</comment>
<comment type="subcellular location">
    <subcellularLocation>
        <location evidence="1">Cytoplasm</location>
    </subcellularLocation>
</comment>
<comment type="similarity">
    <text evidence="1">Belongs to the IF-3 family.</text>
</comment>
<comment type="sequence caution" evidence="2">
    <conflict type="erroneous initiation">
        <sequence resource="EMBL-CDS" id="AAF83547"/>
    </conflict>
</comment>
<name>IF3_XYLFA</name>
<sequence>MGDCNISTSDNKQNRKNHEIRVPRVRVIGSDGEMVGVLSRDEALAMAEKEGLDLVEIQPQADPPVCKVMNFGKFKFEQQKKANEAKKKTKQVEIKELKFRPVTDEGDYQIKLRNMRRFLEEGDKVKINIRFRGREMSHQELGRQMATRIEMDLGDDVVIESRPRLEGRQMVMMVAPRKKS</sequence>
<proteinExistence type="inferred from homology"/>
<gene>
    <name evidence="1" type="primary">infC</name>
    <name type="ordered locus">XF_0737</name>
</gene>
<dbReference type="EMBL" id="AE003849">
    <property type="protein sequence ID" value="AAF83547.1"/>
    <property type="status" value="ALT_INIT"/>
    <property type="molecule type" value="Genomic_DNA"/>
</dbReference>
<dbReference type="PIR" id="F82766">
    <property type="entry name" value="F82766"/>
</dbReference>
<dbReference type="SMR" id="Q9PFE1"/>
<dbReference type="STRING" id="160492.XF_0737"/>
<dbReference type="KEGG" id="xfa:XF_0737"/>
<dbReference type="eggNOG" id="COG0290">
    <property type="taxonomic scope" value="Bacteria"/>
</dbReference>
<dbReference type="HOGENOM" id="CLU_054919_3_2_6"/>
<dbReference type="Proteomes" id="UP000000812">
    <property type="component" value="Chromosome"/>
</dbReference>
<dbReference type="GO" id="GO:0005829">
    <property type="term" value="C:cytosol"/>
    <property type="evidence" value="ECO:0007669"/>
    <property type="project" value="TreeGrafter"/>
</dbReference>
<dbReference type="GO" id="GO:0016020">
    <property type="term" value="C:membrane"/>
    <property type="evidence" value="ECO:0007669"/>
    <property type="project" value="TreeGrafter"/>
</dbReference>
<dbReference type="GO" id="GO:0043022">
    <property type="term" value="F:ribosome binding"/>
    <property type="evidence" value="ECO:0007669"/>
    <property type="project" value="TreeGrafter"/>
</dbReference>
<dbReference type="GO" id="GO:0003743">
    <property type="term" value="F:translation initiation factor activity"/>
    <property type="evidence" value="ECO:0007669"/>
    <property type="project" value="UniProtKB-UniRule"/>
</dbReference>
<dbReference type="GO" id="GO:0032790">
    <property type="term" value="P:ribosome disassembly"/>
    <property type="evidence" value="ECO:0007669"/>
    <property type="project" value="TreeGrafter"/>
</dbReference>
<dbReference type="FunFam" id="3.10.20.80:FF:000001">
    <property type="entry name" value="Translation initiation factor IF-3"/>
    <property type="match status" value="1"/>
</dbReference>
<dbReference type="FunFam" id="3.30.110.10:FF:000001">
    <property type="entry name" value="Translation initiation factor IF-3"/>
    <property type="match status" value="1"/>
</dbReference>
<dbReference type="Gene3D" id="3.30.110.10">
    <property type="entry name" value="Translation initiation factor 3 (IF-3), C-terminal domain"/>
    <property type="match status" value="1"/>
</dbReference>
<dbReference type="Gene3D" id="3.10.20.80">
    <property type="entry name" value="Translation initiation factor 3 (IF-3), N-terminal domain"/>
    <property type="match status" value="1"/>
</dbReference>
<dbReference type="HAMAP" id="MF_00080">
    <property type="entry name" value="IF_3"/>
    <property type="match status" value="1"/>
</dbReference>
<dbReference type="InterPro" id="IPR036788">
    <property type="entry name" value="T_IF-3_C_sf"/>
</dbReference>
<dbReference type="InterPro" id="IPR036787">
    <property type="entry name" value="T_IF-3_N_sf"/>
</dbReference>
<dbReference type="InterPro" id="IPR019813">
    <property type="entry name" value="Translation_initiation_fac3_CS"/>
</dbReference>
<dbReference type="InterPro" id="IPR001288">
    <property type="entry name" value="Translation_initiation_fac_3"/>
</dbReference>
<dbReference type="InterPro" id="IPR019815">
    <property type="entry name" value="Translation_initiation_fac_3_C"/>
</dbReference>
<dbReference type="InterPro" id="IPR019814">
    <property type="entry name" value="Translation_initiation_fac_3_N"/>
</dbReference>
<dbReference type="NCBIfam" id="TIGR00168">
    <property type="entry name" value="infC"/>
    <property type="match status" value="1"/>
</dbReference>
<dbReference type="PANTHER" id="PTHR10938">
    <property type="entry name" value="TRANSLATION INITIATION FACTOR IF-3"/>
    <property type="match status" value="1"/>
</dbReference>
<dbReference type="PANTHER" id="PTHR10938:SF0">
    <property type="entry name" value="TRANSLATION INITIATION FACTOR IF-3, MITOCHONDRIAL"/>
    <property type="match status" value="1"/>
</dbReference>
<dbReference type="Pfam" id="PF00707">
    <property type="entry name" value="IF3_C"/>
    <property type="match status" value="1"/>
</dbReference>
<dbReference type="Pfam" id="PF05198">
    <property type="entry name" value="IF3_N"/>
    <property type="match status" value="1"/>
</dbReference>
<dbReference type="SUPFAM" id="SSF55200">
    <property type="entry name" value="Translation initiation factor IF3, C-terminal domain"/>
    <property type="match status" value="1"/>
</dbReference>
<dbReference type="SUPFAM" id="SSF54364">
    <property type="entry name" value="Translation initiation factor IF3, N-terminal domain"/>
    <property type="match status" value="1"/>
</dbReference>
<dbReference type="PROSITE" id="PS00938">
    <property type="entry name" value="IF3"/>
    <property type="match status" value="1"/>
</dbReference>
<accession>Q9PFE1</accession>
<keyword id="KW-0963">Cytoplasm</keyword>
<keyword id="KW-0396">Initiation factor</keyword>
<keyword id="KW-0648">Protein biosynthesis</keyword>
<reference key="1">
    <citation type="journal article" date="2000" name="Nature">
        <title>The genome sequence of the plant pathogen Xylella fastidiosa.</title>
        <authorList>
            <person name="Simpson A.J.G."/>
            <person name="Reinach F.C."/>
            <person name="Arruda P."/>
            <person name="Abreu F.A."/>
            <person name="Acencio M."/>
            <person name="Alvarenga R."/>
            <person name="Alves L.M.C."/>
            <person name="Araya J.E."/>
            <person name="Baia G.S."/>
            <person name="Baptista C.S."/>
            <person name="Barros M.H."/>
            <person name="Bonaccorsi E.D."/>
            <person name="Bordin S."/>
            <person name="Bove J.M."/>
            <person name="Briones M.R.S."/>
            <person name="Bueno M.R.P."/>
            <person name="Camargo A.A."/>
            <person name="Camargo L.E.A."/>
            <person name="Carraro D.M."/>
            <person name="Carrer H."/>
            <person name="Colauto N.B."/>
            <person name="Colombo C."/>
            <person name="Costa F.F."/>
            <person name="Costa M.C.R."/>
            <person name="Costa-Neto C.M."/>
            <person name="Coutinho L.L."/>
            <person name="Cristofani M."/>
            <person name="Dias-Neto E."/>
            <person name="Docena C."/>
            <person name="El-Dorry H."/>
            <person name="Facincani A.P."/>
            <person name="Ferreira A.J.S."/>
            <person name="Ferreira V.C.A."/>
            <person name="Ferro J.A."/>
            <person name="Fraga J.S."/>
            <person name="Franca S.C."/>
            <person name="Franco M.C."/>
            <person name="Frohme M."/>
            <person name="Furlan L.R."/>
            <person name="Garnier M."/>
            <person name="Goldman G.H."/>
            <person name="Goldman M.H.S."/>
            <person name="Gomes S.L."/>
            <person name="Gruber A."/>
            <person name="Ho P.L."/>
            <person name="Hoheisel J.D."/>
            <person name="Junqueira M.L."/>
            <person name="Kemper E.L."/>
            <person name="Kitajima J.P."/>
            <person name="Krieger J.E."/>
            <person name="Kuramae E.E."/>
            <person name="Laigret F."/>
            <person name="Lambais M.R."/>
            <person name="Leite L.C.C."/>
            <person name="Lemos E.G.M."/>
            <person name="Lemos M.V.F."/>
            <person name="Lopes S.A."/>
            <person name="Lopes C.R."/>
            <person name="Machado J.A."/>
            <person name="Machado M.A."/>
            <person name="Madeira A.M.B.N."/>
            <person name="Madeira H.M.F."/>
            <person name="Marino C.L."/>
            <person name="Marques M.V."/>
            <person name="Martins E.A.L."/>
            <person name="Martins E.M.F."/>
            <person name="Matsukuma A.Y."/>
            <person name="Menck C.F.M."/>
            <person name="Miracca E.C."/>
            <person name="Miyaki C.Y."/>
            <person name="Monteiro-Vitorello C.B."/>
            <person name="Moon D.H."/>
            <person name="Nagai M.A."/>
            <person name="Nascimento A.L.T.O."/>
            <person name="Netto L.E.S."/>
            <person name="Nhani A. Jr."/>
            <person name="Nobrega F.G."/>
            <person name="Nunes L.R."/>
            <person name="Oliveira M.A."/>
            <person name="de Oliveira M.C."/>
            <person name="de Oliveira R.C."/>
            <person name="Palmieri D.A."/>
            <person name="Paris A."/>
            <person name="Peixoto B.R."/>
            <person name="Pereira G.A.G."/>
            <person name="Pereira H.A. Jr."/>
            <person name="Pesquero J.B."/>
            <person name="Quaggio R.B."/>
            <person name="Roberto P.G."/>
            <person name="Rodrigues V."/>
            <person name="de Rosa A.J.M."/>
            <person name="de Rosa V.E. Jr."/>
            <person name="de Sa R.G."/>
            <person name="Santelli R.V."/>
            <person name="Sawasaki H.E."/>
            <person name="da Silva A.C.R."/>
            <person name="da Silva A.M."/>
            <person name="da Silva F.R."/>
            <person name="Silva W.A. Jr."/>
            <person name="da Silveira J.F."/>
            <person name="Silvestri M.L.Z."/>
            <person name="Siqueira W.J."/>
            <person name="de Souza A.A."/>
            <person name="de Souza A.P."/>
            <person name="Terenzi M.F."/>
            <person name="Truffi D."/>
            <person name="Tsai S.M."/>
            <person name="Tsuhako M.H."/>
            <person name="Vallada H."/>
            <person name="Van Sluys M.A."/>
            <person name="Verjovski-Almeida S."/>
            <person name="Vettore A.L."/>
            <person name="Zago M.A."/>
            <person name="Zatz M."/>
            <person name="Meidanis J."/>
            <person name="Setubal J.C."/>
        </authorList>
    </citation>
    <scope>NUCLEOTIDE SEQUENCE [LARGE SCALE GENOMIC DNA]</scope>
    <source>
        <strain>9a5c</strain>
    </source>
</reference>
<feature type="chain" id="PRO_0000177609" description="Translation initiation factor IF-3">
    <location>
        <begin position="1"/>
        <end position="180"/>
    </location>
</feature>
<organism>
    <name type="scientific">Xylella fastidiosa (strain 9a5c)</name>
    <dbReference type="NCBI Taxonomy" id="160492"/>
    <lineage>
        <taxon>Bacteria</taxon>
        <taxon>Pseudomonadati</taxon>
        <taxon>Pseudomonadota</taxon>
        <taxon>Gammaproteobacteria</taxon>
        <taxon>Lysobacterales</taxon>
        <taxon>Lysobacteraceae</taxon>
        <taxon>Xylella</taxon>
    </lineage>
</organism>
<evidence type="ECO:0000255" key="1">
    <source>
        <dbReference type="HAMAP-Rule" id="MF_00080"/>
    </source>
</evidence>
<evidence type="ECO:0000305" key="2"/>